<comment type="function">
    <text evidence="1">Small subunit of the glutamine-dependent carbamoyl phosphate synthetase (CPSase). CPSase catalyzes the formation of carbamoyl phosphate from the ammonia moiety of glutamine, carbonate, and phosphate donated by ATP, constituting the first step of 2 biosynthetic pathways, one leading to arginine and/or urea and the other to pyrimidine nucleotides. The small subunit (glutamine amidotransferase) binds and cleaves glutamine to supply the large subunit with the substrate ammonia.</text>
</comment>
<comment type="catalytic activity">
    <reaction evidence="1">
        <text>hydrogencarbonate + L-glutamine + 2 ATP + H2O = carbamoyl phosphate + L-glutamate + 2 ADP + phosphate + 2 H(+)</text>
        <dbReference type="Rhea" id="RHEA:18633"/>
        <dbReference type="ChEBI" id="CHEBI:15377"/>
        <dbReference type="ChEBI" id="CHEBI:15378"/>
        <dbReference type="ChEBI" id="CHEBI:17544"/>
        <dbReference type="ChEBI" id="CHEBI:29985"/>
        <dbReference type="ChEBI" id="CHEBI:30616"/>
        <dbReference type="ChEBI" id="CHEBI:43474"/>
        <dbReference type="ChEBI" id="CHEBI:58228"/>
        <dbReference type="ChEBI" id="CHEBI:58359"/>
        <dbReference type="ChEBI" id="CHEBI:456216"/>
        <dbReference type="EC" id="6.3.5.5"/>
    </reaction>
</comment>
<comment type="catalytic activity">
    <molecule>Carbamoyl phosphate synthase small chain</molecule>
    <reaction evidence="1">
        <text>L-glutamine + H2O = L-glutamate + NH4(+)</text>
        <dbReference type="Rhea" id="RHEA:15889"/>
        <dbReference type="ChEBI" id="CHEBI:15377"/>
        <dbReference type="ChEBI" id="CHEBI:28938"/>
        <dbReference type="ChEBI" id="CHEBI:29985"/>
        <dbReference type="ChEBI" id="CHEBI:58359"/>
    </reaction>
</comment>
<comment type="pathway">
    <text evidence="1">Amino-acid biosynthesis; L-arginine biosynthesis; carbamoyl phosphate from bicarbonate: step 1/1.</text>
</comment>
<comment type="pathway">
    <text evidence="1">Pyrimidine metabolism; UMP biosynthesis via de novo pathway; (S)-dihydroorotate from bicarbonate: step 1/3.</text>
</comment>
<comment type="subunit">
    <text evidence="1">Composed of two chains; the small (or glutamine) chain promotes the hydrolysis of glutamine to ammonia, which is used by the large (or ammonia) chain to synthesize carbamoyl phosphate. Tetramer of heterodimers (alpha,beta)4.</text>
</comment>
<comment type="similarity">
    <text evidence="1">Belongs to the CarA family.</text>
</comment>
<name>CARA_STRP3</name>
<evidence type="ECO:0000255" key="1">
    <source>
        <dbReference type="HAMAP-Rule" id="MF_01209"/>
    </source>
</evidence>
<organism>
    <name type="scientific">Streptococcus pyogenes serotype M3 (strain ATCC BAA-595 / MGAS315)</name>
    <dbReference type="NCBI Taxonomy" id="198466"/>
    <lineage>
        <taxon>Bacteria</taxon>
        <taxon>Bacillati</taxon>
        <taxon>Bacillota</taxon>
        <taxon>Bacilli</taxon>
        <taxon>Lactobacillales</taxon>
        <taxon>Streptococcaceae</taxon>
        <taxon>Streptococcus</taxon>
    </lineage>
</organism>
<feature type="chain" id="PRO_0000112333" description="Carbamoyl phosphate synthase small chain">
    <location>
        <begin position="1"/>
        <end position="360"/>
    </location>
</feature>
<feature type="domain" description="Glutamine amidotransferase type-1" evidence="1">
    <location>
        <begin position="172"/>
        <end position="358"/>
    </location>
</feature>
<feature type="region of interest" description="CPSase" evidence="1">
    <location>
        <begin position="1"/>
        <end position="169"/>
    </location>
</feature>
<feature type="active site" description="Nucleophile" evidence="1">
    <location>
        <position position="247"/>
    </location>
</feature>
<feature type="active site" evidence="1">
    <location>
        <position position="331"/>
    </location>
</feature>
<feature type="active site" evidence="1">
    <location>
        <position position="333"/>
    </location>
</feature>
<feature type="binding site" evidence="1">
    <location>
        <position position="46"/>
    </location>
    <ligand>
        <name>L-glutamine</name>
        <dbReference type="ChEBI" id="CHEBI:58359"/>
    </ligand>
</feature>
<feature type="binding site" evidence="1">
    <location>
        <position position="220"/>
    </location>
    <ligand>
        <name>L-glutamine</name>
        <dbReference type="ChEBI" id="CHEBI:58359"/>
    </ligand>
</feature>
<feature type="binding site" evidence="1">
    <location>
        <position position="222"/>
    </location>
    <ligand>
        <name>L-glutamine</name>
        <dbReference type="ChEBI" id="CHEBI:58359"/>
    </ligand>
</feature>
<feature type="binding site" evidence="1">
    <location>
        <position position="248"/>
    </location>
    <ligand>
        <name>L-glutamine</name>
        <dbReference type="ChEBI" id="CHEBI:58359"/>
    </ligand>
</feature>
<feature type="binding site" evidence="1">
    <location>
        <position position="251"/>
    </location>
    <ligand>
        <name>L-glutamine</name>
        <dbReference type="ChEBI" id="CHEBI:58359"/>
    </ligand>
</feature>
<feature type="binding site" evidence="1">
    <location>
        <position position="289"/>
    </location>
    <ligand>
        <name>L-glutamine</name>
        <dbReference type="ChEBI" id="CHEBI:58359"/>
    </ligand>
</feature>
<feature type="binding site" evidence="1">
    <location>
        <position position="291"/>
    </location>
    <ligand>
        <name>L-glutamine</name>
        <dbReference type="ChEBI" id="CHEBI:58359"/>
    </ligand>
</feature>
<feature type="binding site" evidence="1">
    <location>
        <position position="292"/>
    </location>
    <ligand>
        <name>L-glutamine</name>
        <dbReference type="ChEBI" id="CHEBI:58359"/>
    </ligand>
</feature>
<sequence length="360" mass="39757">MTKRLLILEDGTIFEGEPFGADIDVTGEIVFNTGMTGYQESITDQSYNGQILTFTYPLIGNYGINRDDYESISPTCKGVVVSEVSRLASNWRKQMTLDAFLKIKGIPGISGIDTRALTKIIRQHGTMKATMADDGDSIQHLKDQLRATVLPTNTIEQVSTKTAYPAPGIGKNIVLVDFGLKHSILREFSKRQCNITVVPFNITAEEVLQLNPDGLMLSNGPGNPEDLPEALDMIRGVQGKIPIFGICMGHQLFSLANGAKTCKMTFGHRGFNHAVREIATGRIDFTSQNHGYAVERSSLPDTLMVTHEDINDKTVEGVKHRDFPAFSVQFHPDAAPGPHDASYLFDEFLEMIDSWRCTSK</sequence>
<proteinExistence type="inferred from homology"/>
<gene>
    <name evidence="1" type="primary">carA</name>
    <name type="ordered locus">SpyM3_0561</name>
</gene>
<keyword id="KW-0028">Amino-acid biosynthesis</keyword>
<keyword id="KW-0055">Arginine biosynthesis</keyword>
<keyword id="KW-0067">ATP-binding</keyword>
<keyword id="KW-0315">Glutamine amidotransferase</keyword>
<keyword id="KW-0436">Ligase</keyword>
<keyword id="KW-0547">Nucleotide-binding</keyword>
<keyword id="KW-0665">Pyrimidine biosynthesis</keyword>
<reference key="1">
    <citation type="journal article" date="2002" name="Proc. Natl. Acad. Sci. U.S.A.">
        <title>Genome sequence of a serotype M3 strain of group A Streptococcus: phage-encoded toxins, the high-virulence phenotype, and clone emergence.</title>
        <authorList>
            <person name="Beres S.B."/>
            <person name="Sylva G.L."/>
            <person name="Barbian K.D."/>
            <person name="Lei B."/>
            <person name="Hoff J.S."/>
            <person name="Mammarella N.D."/>
            <person name="Liu M.-Y."/>
            <person name="Smoot J.C."/>
            <person name="Porcella S.F."/>
            <person name="Parkins L.D."/>
            <person name="Campbell D.S."/>
            <person name="Smith T.M."/>
            <person name="McCormick J.K."/>
            <person name="Leung D.Y.M."/>
            <person name="Schlievert P.M."/>
            <person name="Musser J.M."/>
        </authorList>
    </citation>
    <scope>NUCLEOTIDE SEQUENCE [LARGE SCALE GENOMIC DNA]</scope>
    <source>
        <strain>ATCC BAA-595 / MGAS315</strain>
    </source>
</reference>
<accession>P0DA12</accession>
<accession>P63736</accession>
<accession>Q9A0C7</accession>
<dbReference type="EC" id="6.3.5.5" evidence="1"/>
<dbReference type="EMBL" id="AE014074">
    <property type="protein sequence ID" value="AAM79168.1"/>
    <property type="molecule type" value="Genomic_DNA"/>
</dbReference>
<dbReference type="RefSeq" id="WP_002985087.1">
    <property type="nucleotide sequence ID" value="NC_004070.1"/>
</dbReference>
<dbReference type="SMR" id="P0DA12"/>
<dbReference type="KEGG" id="spg:SpyM3_0561"/>
<dbReference type="HOGENOM" id="CLU_035901_2_1_9"/>
<dbReference type="UniPathway" id="UPA00068">
    <property type="reaction ID" value="UER00171"/>
</dbReference>
<dbReference type="UniPathway" id="UPA00070">
    <property type="reaction ID" value="UER00115"/>
</dbReference>
<dbReference type="Proteomes" id="UP000000564">
    <property type="component" value="Chromosome"/>
</dbReference>
<dbReference type="GO" id="GO:0005524">
    <property type="term" value="F:ATP binding"/>
    <property type="evidence" value="ECO:0007669"/>
    <property type="project" value="UniProtKB-UniRule"/>
</dbReference>
<dbReference type="GO" id="GO:0004088">
    <property type="term" value="F:carbamoyl-phosphate synthase (glutamine-hydrolyzing) activity"/>
    <property type="evidence" value="ECO:0007669"/>
    <property type="project" value="UniProtKB-UniRule"/>
</dbReference>
<dbReference type="GO" id="GO:0004359">
    <property type="term" value="F:glutaminase activity"/>
    <property type="evidence" value="ECO:0007669"/>
    <property type="project" value="RHEA"/>
</dbReference>
<dbReference type="GO" id="GO:0006207">
    <property type="term" value="P:'de novo' pyrimidine nucleobase biosynthetic process"/>
    <property type="evidence" value="ECO:0007669"/>
    <property type="project" value="InterPro"/>
</dbReference>
<dbReference type="GO" id="GO:0044205">
    <property type="term" value="P:'de novo' UMP biosynthetic process"/>
    <property type="evidence" value="ECO:0007669"/>
    <property type="project" value="UniProtKB-UniRule"/>
</dbReference>
<dbReference type="GO" id="GO:0006541">
    <property type="term" value="P:glutamine metabolic process"/>
    <property type="evidence" value="ECO:0007669"/>
    <property type="project" value="InterPro"/>
</dbReference>
<dbReference type="GO" id="GO:0006526">
    <property type="term" value="P:L-arginine biosynthetic process"/>
    <property type="evidence" value="ECO:0007669"/>
    <property type="project" value="UniProtKB-UniRule"/>
</dbReference>
<dbReference type="CDD" id="cd01744">
    <property type="entry name" value="GATase1_CPSase"/>
    <property type="match status" value="1"/>
</dbReference>
<dbReference type="FunFam" id="3.40.50.880:FF:000029">
    <property type="entry name" value="Carbamoyl-phosphate synthase small chain"/>
    <property type="match status" value="1"/>
</dbReference>
<dbReference type="FunFam" id="3.50.30.20:FF:000001">
    <property type="entry name" value="Carbamoyl-phosphate synthase small chain"/>
    <property type="match status" value="1"/>
</dbReference>
<dbReference type="Gene3D" id="3.40.50.880">
    <property type="match status" value="1"/>
</dbReference>
<dbReference type="Gene3D" id="3.50.30.20">
    <property type="entry name" value="Carbamoyl-phosphate synthase small subunit, N-terminal domain"/>
    <property type="match status" value="1"/>
</dbReference>
<dbReference type="HAMAP" id="MF_01209">
    <property type="entry name" value="CPSase_S_chain"/>
    <property type="match status" value="1"/>
</dbReference>
<dbReference type="InterPro" id="IPR050472">
    <property type="entry name" value="Anth_synth/Amidotransfase"/>
</dbReference>
<dbReference type="InterPro" id="IPR006274">
    <property type="entry name" value="CarbamoylP_synth_ssu"/>
</dbReference>
<dbReference type="InterPro" id="IPR002474">
    <property type="entry name" value="CarbamoylP_synth_ssu_N"/>
</dbReference>
<dbReference type="InterPro" id="IPR036480">
    <property type="entry name" value="CarbP_synth_ssu_N_sf"/>
</dbReference>
<dbReference type="InterPro" id="IPR029062">
    <property type="entry name" value="Class_I_gatase-like"/>
</dbReference>
<dbReference type="InterPro" id="IPR035686">
    <property type="entry name" value="CPSase_GATase1"/>
</dbReference>
<dbReference type="InterPro" id="IPR017926">
    <property type="entry name" value="GATASE"/>
</dbReference>
<dbReference type="NCBIfam" id="TIGR01368">
    <property type="entry name" value="CPSaseIIsmall"/>
    <property type="match status" value="1"/>
</dbReference>
<dbReference type="NCBIfam" id="NF009475">
    <property type="entry name" value="PRK12838.1"/>
    <property type="match status" value="1"/>
</dbReference>
<dbReference type="PANTHER" id="PTHR43418:SF7">
    <property type="entry name" value="CARBAMOYL-PHOSPHATE SYNTHASE SMALL CHAIN"/>
    <property type="match status" value="1"/>
</dbReference>
<dbReference type="PANTHER" id="PTHR43418">
    <property type="entry name" value="MULTIFUNCTIONAL TRYPTOPHAN BIOSYNTHESIS PROTEIN-RELATED"/>
    <property type="match status" value="1"/>
</dbReference>
<dbReference type="Pfam" id="PF00988">
    <property type="entry name" value="CPSase_sm_chain"/>
    <property type="match status" value="1"/>
</dbReference>
<dbReference type="Pfam" id="PF00117">
    <property type="entry name" value="GATase"/>
    <property type="match status" value="1"/>
</dbReference>
<dbReference type="PRINTS" id="PR00097">
    <property type="entry name" value="ANTSNTHASEII"/>
</dbReference>
<dbReference type="PRINTS" id="PR00099">
    <property type="entry name" value="CPSGATASE"/>
</dbReference>
<dbReference type="PRINTS" id="PR00096">
    <property type="entry name" value="GATASE"/>
</dbReference>
<dbReference type="SMART" id="SM01097">
    <property type="entry name" value="CPSase_sm_chain"/>
    <property type="match status" value="1"/>
</dbReference>
<dbReference type="SUPFAM" id="SSF52021">
    <property type="entry name" value="Carbamoyl phosphate synthetase, small subunit N-terminal domain"/>
    <property type="match status" value="1"/>
</dbReference>
<dbReference type="SUPFAM" id="SSF52317">
    <property type="entry name" value="Class I glutamine amidotransferase-like"/>
    <property type="match status" value="1"/>
</dbReference>
<dbReference type="PROSITE" id="PS51273">
    <property type="entry name" value="GATASE_TYPE_1"/>
    <property type="match status" value="1"/>
</dbReference>
<protein>
    <recommendedName>
        <fullName evidence="1">Carbamoyl phosphate synthase small chain</fullName>
        <ecNumber evidence="1">6.3.5.5</ecNumber>
    </recommendedName>
    <alternativeName>
        <fullName evidence="1">Carbamoyl phosphate synthetase glutamine chain</fullName>
    </alternativeName>
</protein>